<organism>
    <name type="scientific">Tetrahymena borealis</name>
    <dbReference type="NCBI Taxonomy" id="5893"/>
    <lineage>
        <taxon>Eukaryota</taxon>
        <taxon>Sar</taxon>
        <taxon>Alveolata</taxon>
        <taxon>Ciliophora</taxon>
        <taxon>Intramacronucleata</taxon>
        <taxon>Oligohymenophorea</taxon>
        <taxon>Hymenostomatida</taxon>
        <taxon>Tetrahymenina</taxon>
        <taxon>Tetrahymenidae</taxon>
        <taxon>Tetrahymena</taxon>
    </lineage>
</organism>
<comment type="function">
    <text>Core component of nucleosome. Nucleosomes wrap and compact DNA into chromatin, limiting DNA accessibility to the cellular machineries which require DNA as a template. Histones thereby play a central role in transcription regulation, DNA repair, DNA replication and chromosomal stability. DNA accessibility is regulated via a complex set of post-translational modifications of histones, also called histone code, and nucleosome remodeling.</text>
</comment>
<comment type="subunit">
    <text>The nucleosome is a histone octamer containing two molecules each of H2A, H2B, H3 and H4 assembled in one H3-H4 heterotetramer and two H2A-H2B heterodimers. The octamer wraps approximately 147 bp of DNA.</text>
</comment>
<comment type="subcellular location">
    <subcellularLocation>
        <location evidence="1">Nucleus</location>
    </subcellularLocation>
    <subcellularLocation>
        <location evidence="1">Chromosome</location>
    </subcellularLocation>
</comment>
<comment type="similarity">
    <text evidence="3">Belongs to the histone H3 family.</text>
</comment>
<dbReference type="EMBL" id="X17128">
    <property type="protein sequence ID" value="CAA34990.1"/>
    <property type="status" value="ALT_SEQ"/>
    <property type="molecule type" value="Genomic_DNA"/>
</dbReference>
<dbReference type="PIR" id="S10263">
    <property type="entry name" value="S10263"/>
</dbReference>
<dbReference type="GO" id="GO:0000786">
    <property type="term" value="C:nucleosome"/>
    <property type="evidence" value="ECO:0007669"/>
    <property type="project" value="UniProtKB-KW"/>
</dbReference>
<dbReference type="GO" id="GO:0005634">
    <property type="term" value="C:nucleus"/>
    <property type="evidence" value="ECO:0007669"/>
    <property type="project" value="UniProtKB-SubCell"/>
</dbReference>
<dbReference type="GO" id="GO:0003677">
    <property type="term" value="F:DNA binding"/>
    <property type="evidence" value="ECO:0007669"/>
    <property type="project" value="UniProtKB-KW"/>
</dbReference>
<dbReference type="GO" id="GO:0046982">
    <property type="term" value="F:protein heterodimerization activity"/>
    <property type="evidence" value="ECO:0007669"/>
    <property type="project" value="InterPro"/>
</dbReference>
<dbReference type="GO" id="GO:0030527">
    <property type="term" value="F:structural constituent of chromatin"/>
    <property type="evidence" value="ECO:0007669"/>
    <property type="project" value="InterPro"/>
</dbReference>
<dbReference type="Gene3D" id="1.10.20.10">
    <property type="entry name" value="Histone, subunit A"/>
    <property type="match status" value="1"/>
</dbReference>
<dbReference type="InterPro" id="IPR009072">
    <property type="entry name" value="Histone-fold"/>
</dbReference>
<dbReference type="InterPro" id="IPR000164">
    <property type="entry name" value="Histone_H3/CENP-A"/>
</dbReference>
<dbReference type="PRINTS" id="PR00622">
    <property type="entry name" value="HISTONEH3"/>
</dbReference>
<dbReference type="SUPFAM" id="SSF47113">
    <property type="entry name" value="Histone-fold"/>
    <property type="match status" value="1"/>
</dbReference>
<reference key="1">
    <citation type="journal article" date="1990" name="Nucleic Acids Res.">
        <title>Characterization of the promoter region of Tetrahymena genes.</title>
        <authorList>
            <person name="Brunk C.F."/>
            <person name="Sadler L.A."/>
        </authorList>
    </citation>
    <scope>NUCLEOTIDE SEQUENCE [GENOMIC DNA]</scope>
    <source>
        <strain>WZ3</strain>
    </source>
</reference>
<reference key="2">
    <citation type="journal article" date="1990" name="J. Mol. Evol.">
        <title>Phylogenetic relationships among Tetrahymena species determined using the polymerase chain reaction.</title>
        <authorList>
            <person name="Brunk C.F."/>
            <person name="Kahn R.W."/>
            <person name="Sadler L.A."/>
        </authorList>
    </citation>
    <scope>NUCLEOTIDE SEQUENCE [GENOMIC DNA]</scope>
    <source>
        <strain>WZ3</strain>
    </source>
</reference>
<name>H32_TETBO</name>
<keyword id="KW-0158">Chromosome</keyword>
<keyword id="KW-0238">DNA-binding</keyword>
<keyword id="KW-0544">Nucleosome core</keyword>
<keyword id="KW-0539">Nucleus</keyword>
<feature type="initiator methionine" description="Removed" evidence="3">
    <location>
        <position position="1"/>
    </location>
</feature>
<feature type="chain" id="PRO_0000221333" description="Histone H3.2">
    <location>
        <begin position="2"/>
        <end position="41" status="greater than"/>
    </location>
</feature>
<feature type="region of interest" description="Disordered" evidence="2">
    <location>
        <begin position="1"/>
        <end position="41"/>
    </location>
</feature>
<feature type="non-terminal residue">
    <location>
        <position position="41"/>
    </location>
</feature>
<evidence type="ECO:0000250" key="1"/>
<evidence type="ECO:0000256" key="2">
    <source>
        <dbReference type="SAM" id="MobiDB-lite"/>
    </source>
</evidence>
<evidence type="ECO:0000305" key="3"/>
<proteinExistence type="inferred from homology"/>
<accession>P17319</accession>
<sequence>MARAKQTARKSTGAEAPRKQLASKAARKSAPATGGIKKPHR</sequence>
<protein>
    <recommendedName>
        <fullName>Histone H3.2</fullName>
    </recommendedName>
</protein>